<organism>
    <name type="scientific">Mycobacterium tuberculosis (strain CDC 1551 / Oshkosh)</name>
    <dbReference type="NCBI Taxonomy" id="83331"/>
    <lineage>
        <taxon>Bacteria</taxon>
        <taxon>Bacillati</taxon>
        <taxon>Actinomycetota</taxon>
        <taxon>Actinomycetes</taxon>
        <taxon>Mycobacteriales</taxon>
        <taxon>Mycobacteriaceae</taxon>
        <taxon>Mycobacterium</taxon>
        <taxon>Mycobacterium tuberculosis complex</taxon>
    </lineage>
</organism>
<evidence type="ECO:0000255" key="1">
    <source>
        <dbReference type="HAMAP-Rule" id="MF_00152"/>
    </source>
</evidence>
<protein>
    <recommendedName>
        <fullName evidence="1">Probable endonuclease 4</fullName>
        <ecNumber evidence="1">3.1.21.2</ecNumber>
    </recommendedName>
    <alternativeName>
        <fullName evidence="1">Endodeoxyribonuclease IV</fullName>
    </alternativeName>
    <alternativeName>
        <fullName evidence="1">Endonuclease IV</fullName>
    </alternativeName>
</protein>
<accession>P9WQ12</accession>
<accession>L0T772</accession>
<accession>O86366</accession>
<accession>P63535</accession>
<feature type="chain" id="PRO_0000426856" description="Probable endonuclease 4">
    <location>
        <begin position="1"/>
        <end position="252"/>
    </location>
</feature>
<feature type="binding site" evidence="1">
    <location>
        <position position="56"/>
    </location>
    <ligand>
        <name>Zn(2+)</name>
        <dbReference type="ChEBI" id="CHEBI:29105"/>
        <label>1</label>
    </ligand>
</feature>
<feature type="binding site" evidence="1">
    <location>
        <position position="96"/>
    </location>
    <ligand>
        <name>Zn(2+)</name>
        <dbReference type="ChEBI" id="CHEBI:29105"/>
        <label>1</label>
    </ligand>
</feature>
<feature type="binding site" evidence="1">
    <location>
        <position position="129"/>
    </location>
    <ligand>
        <name>Zn(2+)</name>
        <dbReference type="ChEBI" id="CHEBI:29105"/>
        <label>1</label>
    </ligand>
</feature>
<feature type="binding site" evidence="1">
    <location>
        <position position="129"/>
    </location>
    <ligand>
        <name>Zn(2+)</name>
        <dbReference type="ChEBI" id="CHEBI:29105"/>
        <label>2</label>
    </ligand>
</feature>
<feature type="binding site" evidence="1">
    <location>
        <position position="162"/>
    </location>
    <ligand>
        <name>Zn(2+)</name>
        <dbReference type="ChEBI" id="CHEBI:29105"/>
        <label>2</label>
    </ligand>
</feature>
<feature type="binding site" evidence="1">
    <location>
        <position position="165"/>
    </location>
    <ligand>
        <name>Zn(2+)</name>
        <dbReference type="ChEBI" id="CHEBI:29105"/>
        <label>3</label>
    </ligand>
</feature>
<feature type="binding site" evidence="1">
    <location>
        <position position="191"/>
    </location>
    <ligand>
        <name>Zn(2+)</name>
        <dbReference type="ChEBI" id="CHEBI:29105"/>
        <label>2</label>
    </ligand>
</feature>
<feature type="binding site" evidence="1">
    <location>
        <position position="204"/>
    </location>
    <ligand>
        <name>Zn(2+)</name>
        <dbReference type="ChEBI" id="CHEBI:29105"/>
        <label>3</label>
    </ligand>
</feature>
<feature type="binding site" evidence="1">
    <location>
        <position position="206"/>
    </location>
    <ligand>
        <name>Zn(2+)</name>
        <dbReference type="ChEBI" id="CHEBI:29105"/>
        <label>3</label>
    </ligand>
</feature>
<feature type="binding site" evidence="1">
    <location>
        <position position="233"/>
    </location>
    <ligand>
        <name>Zn(2+)</name>
        <dbReference type="ChEBI" id="CHEBI:29105"/>
        <label>2</label>
    </ligand>
</feature>
<name>END4_MYCTO</name>
<proteinExistence type="inferred from homology"/>
<sequence>MLIGSHVSPTDPLAAAEAEGADVVQIFLGNPQSWKAPKPRDDAAALKAATLPIYVHAPYLINLASANNRVRIPSRKILQETCAAAADIGAAAVIVHGGHVADDNDIDKGFQRWRKALDRLETEVPVYLENTAGGDHAMARRFDTIARLWDVIGDTGIGFCLDTCHTWAAGEALTDAVDRIKAITGRIDLVHCNDSRDEAGSGRDRHANLGSGQIDPDLLVAAVKAAGAPVICETADQGRKDDIAFLRERTGS</sequence>
<gene>
    <name type="primary">end</name>
    <name type="synonym">nfo</name>
    <name type="ordered locus">MT0699</name>
</gene>
<dbReference type="EC" id="3.1.21.2" evidence="1"/>
<dbReference type="EMBL" id="AE000516">
    <property type="protein sequence ID" value="AAK44924.1"/>
    <property type="molecule type" value="Genomic_DNA"/>
</dbReference>
<dbReference type="PIR" id="G70825">
    <property type="entry name" value="G70825"/>
</dbReference>
<dbReference type="RefSeq" id="WP_003403419.1">
    <property type="nucleotide sequence ID" value="NZ_KK341227.1"/>
</dbReference>
<dbReference type="SMR" id="P9WQ12"/>
<dbReference type="KEGG" id="mtc:MT0699"/>
<dbReference type="PATRIC" id="fig|83331.31.peg.745"/>
<dbReference type="HOGENOM" id="CLU_025885_0_2_11"/>
<dbReference type="Proteomes" id="UP000001020">
    <property type="component" value="Chromosome"/>
</dbReference>
<dbReference type="GO" id="GO:0008833">
    <property type="term" value="F:deoxyribonuclease IV (phage-T4-induced) activity"/>
    <property type="evidence" value="ECO:0007669"/>
    <property type="project" value="UniProtKB-UniRule"/>
</dbReference>
<dbReference type="GO" id="GO:0003677">
    <property type="term" value="F:DNA binding"/>
    <property type="evidence" value="ECO:0007669"/>
    <property type="project" value="InterPro"/>
</dbReference>
<dbReference type="GO" id="GO:0003906">
    <property type="term" value="F:DNA-(apurinic or apyrimidinic site) endonuclease activity"/>
    <property type="evidence" value="ECO:0007669"/>
    <property type="project" value="TreeGrafter"/>
</dbReference>
<dbReference type="GO" id="GO:0008081">
    <property type="term" value="F:phosphoric diester hydrolase activity"/>
    <property type="evidence" value="ECO:0007669"/>
    <property type="project" value="TreeGrafter"/>
</dbReference>
<dbReference type="GO" id="GO:0008270">
    <property type="term" value="F:zinc ion binding"/>
    <property type="evidence" value="ECO:0007669"/>
    <property type="project" value="UniProtKB-UniRule"/>
</dbReference>
<dbReference type="GO" id="GO:0006284">
    <property type="term" value="P:base-excision repair"/>
    <property type="evidence" value="ECO:0007669"/>
    <property type="project" value="TreeGrafter"/>
</dbReference>
<dbReference type="CDD" id="cd00019">
    <property type="entry name" value="AP2Ec"/>
    <property type="match status" value="1"/>
</dbReference>
<dbReference type="FunFam" id="3.20.20.150:FF:000019">
    <property type="entry name" value="Probable endonuclease 4"/>
    <property type="match status" value="1"/>
</dbReference>
<dbReference type="Gene3D" id="3.20.20.150">
    <property type="entry name" value="Divalent-metal-dependent TIM barrel enzymes"/>
    <property type="match status" value="1"/>
</dbReference>
<dbReference type="HAMAP" id="MF_00152">
    <property type="entry name" value="Nfo"/>
    <property type="match status" value="1"/>
</dbReference>
<dbReference type="InterPro" id="IPR001719">
    <property type="entry name" value="AP_endonuc_2"/>
</dbReference>
<dbReference type="InterPro" id="IPR018246">
    <property type="entry name" value="AP_endonuc_F2_Zn_BS"/>
</dbReference>
<dbReference type="InterPro" id="IPR036237">
    <property type="entry name" value="Xyl_isomerase-like_sf"/>
</dbReference>
<dbReference type="InterPro" id="IPR013022">
    <property type="entry name" value="Xyl_isomerase-like_TIM-brl"/>
</dbReference>
<dbReference type="NCBIfam" id="NF002198">
    <property type="entry name" value="PRK01060.1-3"/>
    <property type="match status" value="1"/>
</dbReference>
<dbReference type="PANTHER" id="PTHR21445:SF0">
    <property type="entry name" value="APURINIC-APYRIMIDINIC ENDONUCLEASE"/>
    <property type="match status" value="1"/>
</dbReference>
<dbReference type="PANTHER" id="PTHR21445">
    <property type="entry name" value="ENDONUCLEASE IV ENDODEOXYRIBONUCLEASE IV"/>
    <property type="match status" value="1"/>
</dbReference>
<dbReference type="Pfam" id="PF01261">
    <property type="entry name" value="AP_endonuc_2"/>
    <property type="match status" value="1"/>
</dbReference>
<dbReference type="SMART" id="SM00518">
    <property type="entry name" value="AP2Ec"/>
    <property type="match status" value="1"/>
</dbReference>
<dbReference type="SUPFAM" id="SSF51658">
    <property type="entry name" value="Xylose isomerase-like"/>
    <property type="match status" value="1"/>
</dbReference>
<dbReference type="PROSITE" id="PS00729">
    <property type="entry name" value="AP_NUCLEASE_F2_1"/>
    <property type="match status" value="1"/>
</dbReference>
<dbReference type="PROSITE" id="PS00730">
    <property type="entry name" value="AP_NUCLEASE_F2_2"/>
    <property type="match status" value="1"/>
</dbReference>
<dbReference type="PROSITE" id="PS00731">
    <property type="entry name" value="AP_NUCLEASE_F2_3"/>
    <property type="match status" value="1"/>
</dbReference>
<dbReference type="PROSITE" id="PS51432">
    <property type="entry name" value="AP_NUCLEASE_F2_4"/>
    <property type="match status" value="1"/>
</dbReference>
<comment type="function">
    <text evidence="1">Endonuclease IV plays a role in DNA repair. It cleaves phosphodiester bonds at apurinic or apyrimidinic (AP) sites, generating a 3'-hydroxyl group and a 5'-terminal sugar phosphate.</text>
</comment>
<comment type="catalytic activity">
    <reaction evidence="1">
        <text>Endonucleolytic cleavage to 5'-phosphooligonucleotide end-products.</text>
        <dbReference type="EC" id="3.1.21.2"/>
    </reaction>
</comment>
<comment type="cofactor">
    <cofactor evidence="1">
        <name>Zn(2+)</name>
        <dbReference type="ChEBI" id="CHEBI:29105"/>
    </cofactor>
    <text evidence="1">Binds 3 Zn(2+) ions.</text>
</comment>
<comment type="similarity">
    <text evidence="1">Belongs to the AP endonuclease 2 family.</text>
</comment>
<keyword id="KW-0227">DNA damage</keyword>
<keyword id="KW-0234">DNA repair</keyword>
<keyword id="KW-0255">Endonuclease</keyword>
<keyword id="KW-0378">Hydrolase</keyword>
<keyword id="KW-0479">Metal-binding</keyword>
<keyword id="KW-0540">Nuclease</keyword>
<keyword id="KW-1185">Reference proteome</keyword>
<keyword id="KW-0862">Zinc</keyword>
<reference key="1">
    <citation type="journal article" date="2002" name="J. Bacteriol.">
        <title>Whole-genome comparison of Mycobacterium tuberculosis clinical and laboratory strains.</title>
        <authorList>
            <person name="Fleischmann R.D."/>
            <person name="Alland D."/>
            <person name="Eisen J.A."/>
            <person name="Carpenter L."/>
            <person name="White O."/>
            <person name="Peterson J.D."/>
            <person name="DeBoy R.T."/>
            <person name="Dodson R.J."/>
            <person name="Gwinn M.L."/>
            <person name="Haft D.H."/>
            <person name="Hickey E.K."/>
            <person name="Kolonay J.F."/>
            <person name="Nelson W.C."/>
            <person name="Umayam L.A."/>
            <person name="Ermolaeva M.D."/>
            <person name="Salzberg S.L."/>
            <person name="Delcher A."/>
            <person name="Utterback T.R."/>
            <person name="Weidman J.F."/>
            <person name="Khouri H.M."/>
            <person name="Gill J."/>
            <person name="Mikula A."/>
            <person name="Bishai W."/>
            <person name="Jacobs W.R. Jr."/>
            <person name="Venter J.C."/>
            <person name="Fraser C.M."/>
        </authorList>
    </citation>
    <scope>NUCLEOTIDE SEQUENCE [LARGE SCALE GENOMIC DNA]</scope>
    <source>
        <strain>CDC 1551 / Oshkosh</strain>
    </source>
</reference>